<sequence length="122" mass="13418">MIQMQTMLEVADNTGARHVQCIKVLGGSKRRYASVGDIIKVSIKDAAPRGRVKKGDVYNAVVVRTAKGVRRPDGSLIKFDSNAAVLLNNKLEPIGTRIFGPVTRELRTERFMKIVSLAPEVL</sequence>
<feature type="chain" id="PRO_0000266469" description="Large ribosomal subunit protein uL14">
    <location>
        <begin position="1"/>
        <end position="122"/>
    </location>
</feature>
<keyword id="KW-1185">Reference proteome</keyword>
<keyword id="KW-0687">Ribonucleoprotein</keyword>
<keyword id="KW-0689">Ribosomal protein</keyword>
<keyword id="KW-0694">RNA-binding</keyword>
<keyword id="KW-0699">rRNA-binding</keyword>
<organism>
    <name type="scientific">Chromobacterium violaceum (strain ATCC 12472 / DSM 30191 / JCM 1249 / CCUG 213 / NBRC 12614 / NCIMB 9131 / NCTC 9757 / MK)</name>
    <dbReference type="NCBI Taxonomy" id="243365"/>
    <lineage>
        <taxon>Bacteria</taxon>
        <taxon>Pseudomonadati</taxon>
        <taxon>Pseudomonadota</taxon>
        <taxon>Betaproteobacteria</taxon>
        <taxon>Neisseriales</taxon>
        <taxon>Chromobacteriaceae</taxon>
        <taxon>Chromobacterium</taxon>
    </lineage>
</organism>
<dbReference type="EMBL" id="AE016825">
    <property type="protein sequence ID" value="AAQ61836.1"/>
    <property type="molecule type" value="Genomic_DNA"/>
</dbReference>
<dbReference type="RefSeq" id="WP_011137723.1">
    <property type="nucleotide sequence ID" value="NC_005085.1"/>
</dbReference>
<dbReference type="SMR" id="Q7NQG2"/>
<dbReference type="STRING" id="243365.CV_4176"/>
<dbReference type="GeneID" id="97477825"/>
<dbReference type="KEGG" id="cvi:CV_4176"/>
<dbReference type="eggNOG" id="COG0093">
    <property type="taxonomic scope" value="Bacteria"/>
</dbReference>
<dbReference type="HOGENOM" id="CLU_095071_2_1_4"/>
<dbReference type="OrthoDB" id="9806379at2"/>
<dbReference type="Proteomes" id="UP000001424">
    <property type="component" value="Chromosome"/>
</dbReference>
<dbReference type="GO" id="GO:0022625">
    <property type="term" value="C:cytosolic large ribosomal subunit"/>
    <property type="evidence" value="ECO:0007669"/>
    <property type="project" value="TreeGrafter"/>
</dbReference>
<dbReference type="GO" id="GO:0070180">
    <property type="term" value="F:large ribosomal subunit rRNA binding"/>
    <property type="evidence" value="ECO:0007669"/>
    <property type="project" value="TreeGrafter"/>
</dbReference>
<dbReference type="GO" id="GO:0003735">
    <property type="term" value="F:structural constituent of ribosome"/>
    <property type="evidence" value="ECO:0007669"/>
    <property type="project" value="InterPro"/>
</dbReference>
<dbReference type="GO" id="GO:0006412">
    <property type="term" value="P:translation"/>
    <property type="evidence" value="ECO:0007669"/>
    <property type="project" value="UniProtKB-UniRule"/>
</dbReference>
<dbReference type="CDD" id="cd00337">
    <property type="entry name" value="Ribosomal_uL14"/>
    <property type="match status" value="1"/>
</dbReference>
<dbReference type="FunFam" id="2.40.150.20:FF:000001">
    <property type="entry name" value="50S ribosomal protein L14"/>
    <property type="match status" value="1"/>
</dbReference>
<dbReference type="Gene3D" id="2.40.150.20">
    <property type="entry name" value="Ribosomal protein L14"/>
    <property type="match status" value="1"/>
</dbReference>
<dbReference type="HAMAP" id="MF_01367">
    <property type="entry name" value="Ribosomal_uL14"/>
    <property type="match status" value="1"/>
</dbReference>
<dbReference type="InterPro" id="IPR000218">
    <property type="entry name" value="Ribosomal_uL14"/>
</dbReference>
<dbReference type="InterPro" id="IPR005745">
    <property type="entry name" value="Ribosomal_uL14_bac-type"/>
</dbReference>
<dbReference type="InterPro" id="IPR019972">
    <property type="entry name" value="Ribosomal_uL14_CS"/>
</dbReference>
<dbReference type="InterPro" id="IPR036853">
    <property type="entry name" value="Ribosomal_uL14_sf"/>
</dbReference>
<dbReference type="NCBIfam" id="TIGR01067">
    <property type="entry name" value="rplN_bact"/>
    <property type="match status" value="1"/>
</dbReference>
<dbReference type="PANTHER" id="PTHR11761">
    <property type="entry name" value="50S/60S RIBOSOMAL PROTEIN L14/L23"/>
    <property type="match status" value="1"/>
</dbReference>
<dbReference type="PANTHER" id="PTHR11761:SF3">
    <property type="entry name" value="LARGE RIBOSOMAL SUBUNIT PROTEIN UL14M"/>
    <property type="match status" value="1"/>
</dbReference>
<dbReference type="Pfam" id="PF00238">
    <property type="entry name" value="Ribosomal_L14"/>
    <property type="match status" value="1"/>
</dbReference>
<dbReference type="SMART" id="SM01374">
    <property type="entry name" value="Ribosomal_L14"/>
    <property type="match status" value="1"/>
</dbReference>
<dbReference type="SUPFAM" id="SSF50193">
    <property type="entry name" value="Ribosomal protein L14"/>
    <property type="match status" value="1"/>
</dbReference>
<dbReference type="PROSITE" id="PS00049">
    <property type="entry name" value="RIBOSOMAL_L14"/>
    <property type="match status" value="1"/>
</dbReference>
<comment type="function">
    <text evidence="1">Binds to 23S rRNA. Forms part of two intersubunit bridges in the 70S ribosome.</text>
</comment>
<comment type="subunit">
    <text evidence="1">Part of the 50S ribosomal subunit. Forms a cluster with proteins L3 and L19. In the 70S ribosome, L14 and L19 interact and together make contacts with the 16S rRNA in bridges B5 and B8.</text>
</comment>
<comment type="similarity">
    <text evidence="1">Belongs to the universal ribosomal protein uL14 family.</text>
</comment>
<name>RL14_CHRVO</name>
<gene>
    <name evidence="1" type="primary">rplN</name>
    <name type="ordered locus">CV_4176</name>
</gene>
<evidence type="ECO:0000255" key="1">
    <source>
        <dbReference type="HAMAP-Rule" id="MF_01367"/>
    </source>
</evidence>
<evidence type="ECO:0000305" key="2"/>
<proteinExistence type="inferred from homology"/>
<reference key="1">
    <citation type="journal article" date="2003" name="Proc. Natl. Acad. Sci. U.S.A.">
        <title>The complete genome sequence of Chromobacterium violaceum reveals remarkable and exploitable bacterial adaptability.</title>
        <authorList>
            <person name="Vasconcelos A.T.R."/>
            <person name="de Almeida D.F."/>
            <person name="Hungria M."/>
            <person name="Guimaraes C.T."/>
            <person name="Antonio R.V."/>
            <person name="Almeida F.C."/>
            <person name="de Almeida L.G.P."/>
            <person name="de Almeida R."/>
            <person name="Alves-Gomes J.A."/>
            <person name="Andrade E.M."/>
            <person name="Araripe J."/>
            <person name="de Araujo M.F.F."/>
            <person name="Astolfi-Filho S."/>
            <person name="Azevedo V."/>
            <person name="Baptista A.J."/>
            <person name="Bataus L.A.M."/>
            <person name="Batista J.S."/>
            <person name="Belo A."/>
            <person name="van den Berg C."/>
            <person name="Bogo M."/>
            <person name="Bonatto S."/>
            <person name="Bordignon J."/>
            <person name="Brigido M.M."/>
            <person name="Brito C.A."/>
            <person name="Brocchi M."/>
            <person name="Burity H.A."/>
            <person name="Camargo A.A."/>
            <person name="Cardoso D.D.P."/>
            <person name="Carneiro N.P."/>
            <person name="Carraro D.M."/>
            <person name="Carvalho C.M.B."/>
            <person name="Cascardo J.C.M."/>
            <person name="Cavada B.S."/>
            <person name="Chueire L.M.O."/>
            <person name="Creczynski-Pasa T.B."/>
            <person name="Cunha-Junior N.C."/>
            <person name="Fagundes N."/>
            <person name="Falcao C.L."/>
            <person name="Fantinatti F."/>
            <person name="Farias I.P."/>
            <person name="Felipe M.S.S."/>
            <person name="Ferrari L.P."/>
            <person name="Ferro J.A."/>
            <person name="Ferro M.I.T."/>
            <person name="Franco G.R."/>
            <person name="Freitas N.S.A."/>
            <person name="Furlan L.R."/>
            <person name="Gazzinelli R.T."/>
            <person name="Gomes E.A."/>
            <person name="Goncalves P.R."/>
            <person name="Grangeiro T.B."/>
            <person name="Grattapaglia D."/>
            <person name="Grisard E.C."/>
            <person name="Hanna E.S."/>
            <person name="Jardim S.N."/>
            <person name="Laurino J."/>
            <person name="Leoi L.C.T."/>
            <person name="Lima L.F.A."/>
            <person name="Loureiro M.F."/>
            <person name="Lyra M.C.C.P."/>
            <person name="Madeira H.M.F."/>
            <person name="Manfio G.P."/>
            <person name="Maranhao A.Q."/>
            <person name="Martins W.S."/>
            <person name="di Mauro S.M.Z."/>
            <person name="de Medeiros S.R.B."/>
            <person name="Meissner R.V."/>
            <person name="Moreira M.A.M."/>
            <person name="Nascimento F.F."/>
            <person name="Nicolas M.F."/>
            <person name="Oliveira J.G."/>
            <person name="Oliveira S.C."/>
            <person name="Paixao R.F.C."/>
            <person name="Parente J.A."/>
            <person name="Pedrosa F.O."/>
            <person name="Pena S.D.J."/>
            <person name="Pereira J.O."/>
            <person name="Pereira M."/>
            <person name="Pinto L.S.R.C."/>
            <person name="Pinto L.S."/>
            <person name="Porto J.I.R."/>
            <person name="Potrich D.P."/>
            <person name="Ramalho-Neto C.E."/>
            <person name="Reis A.M.M."/>
            <person name="Rigo L.U."/>
            <person name="Rondinelli E."/>
            <person name="Santos E.B.P."/>
            <person name="Santos F.R."/>
            <person name="Schneider M.P.C."/>
            <person name="Seuanez H.N."/>
            <person name="Silva A.M.R."/>
            <person name="da Silva A.L.C."/>
            <person name="Silva D.W."/>
            <person name="Silva R."/>
            <person name="Simoes I.C."/>
            <person name="Simon D."/>
            <person name="Soares C.M.A."/>
            <person name="Soares R.B.A."/>
            <person name="Souza E.M."/>
            <person name="Souza K.R.L."/>
            <person name="Souza R.C."/>
            <person name="Steffens M.B.R."/>
            <person name="Steindel M."/>
            <person name="Teixeira S.R."/>
            <person name="Urmenyi T."/>
            <person name="Vettore A."/>
            <person name="Wassem R."/>
            <person name="Zaha A."/>
            <person name="Simpson A.J.G."/>
        </authorList>
    </citation>
    <scope>NUCLEOTIDE SEQUENCE [LARGE SCALE GENOMIC DNA]</scope>
    <source>
        <strain>ATCC 12472 / DSM 30191 / JCM 1249 / CCUG 213 / NBRC 12614 / NCIMB 9131 / NCTC 9757 / MK</strain>
    </source>
</reference>
<accession>Q7NQG2</accession>
<protein>
    <recommendedName>
        <fullName evidence="1">Large ribosomal subunit protein uL14</fullName>
    </recommendedName>
    <alternativeName>
        <fullName evidence="2">50S ribosomal protein L14</fullName>
    </alternativeName>
</protein>